<keyword id="KW-0963">Cytoplasm</keyword>
<keyword id="KW-0560">Oxidoreductase</keyword>
<name>CYSH_YERPB</name>
<dbReference type="EC" id="1.8.4.8" evidence="1"/>
<dbReference type="EMBL" id="CP001048">
    <property type="protein sequence ID" value="ACC87778.1"/>
    <property type="molecule type" value="Genomic_DNA"/>
</dbReference>
<dbReference type="RefSeq" id="WP_011191774.1">
    <property type="nucleotide sequence ID" value="NZ_CP009780.1"/>
</dbReference>
<dbReference type="SMR" id="B2K567"/>
<dbReference type="KEGG" id="ypb:YPTS_0794"/>
<dbReference type="PATRIC" id="fig|502801.10.peg.126"/>
<dbReference type="UniPathway" id="UPA00140">
    <property type="reaction ID" value="UER00206"/>
</dbReference>
<dbReference type="GO" id="GO:0005737">
    <property type="term" value="C:cytoplasm"/>
    <property type="evidence" value="ECO:0007669"/>
    <property type="project" value="UniProtKB-SubCell"/>
</dbReference>
<dbReference type="GO" id="GO:0004604">
    <property type="term" value="F:phosphoadenylyl-sulfate reductase (thioredoxin) activity"/>
    <property type="evidence" value="ECO:0007669"/>
    <property type="project" value="UniProtKB-UniRule"/>
</dbReference>
<dbReference type="GO" id="GO:0070814">
    <property type="term" value="P:hydrogen sulfide biosynthetic process"/>
    <property type="evidence" value="ECO:0007669"/>
    <property type="project" value="UniProtKB-UniRule"/>
</dbReference>
<dbReference type="GO" id="GO:0019379">
    <property type="term" value="P:sulfate assimilation, phosphoadenylyl sulfate reduction by phosphoadenylyl-sulfate reductase (thioredoxin)"/>
    <property type="evidence" value="ECO:0007669"/>
    <property type="project" value="UniProtKB-UniRule"/>
</dbReference>
<dbReference type="CDD" id="cd23945">
    <property type="entry name" value="PAPS_reductase"/>
    <property type="match status" value="1"/>
</dbReference>
<dbReference type="FunFam" id="3.40.50.620:FF:000043">
    <property type="entry name" value="Phosphoadenosine phosphosulfate reductase"/>
    <property type="match status" value="1"/>
</dbReference>
<dbReference type="Gene3D" id="3.40.50.620">
    <property type="entry name" value="HUPs"/>
    <property type="match status" value="1"/>
</dbReference>
<dbReference type="HAMAP" id="MF_00063">
    <property type="entry name" value="CysH"/>
    <property type="match status" value="1"/>
</dbReference>
<dbReference type="InterPro" id="IPR004511">
    <property type="entry name" value="PAPS/APS_Rdtase"/>
</dbReference>
<dbReference type="InterPro" id="IPR002500">
    <property type="entry name" value="PAPS_reduct_dom"/>
</dbReference>
<dbReference type="InterPro" id="IPR011800">
    <property type="entry name" value="PAPS_reductase_CysH"/>
</dbReference>
<dbReference type="InterPro" id="IPR014729">
    <property type="entry name" value="Rossmann-like_a/b/a_fold"/>
</dbReference>
<dbReference type="NCBIfam" id="TIGR00434">
    <property type="entry name" value="cysH"/>
    <property type="match status" value="1"/>
</dbReference>
<dbReference type="NCBIfam" id="TIGR02057">
    <property type="entry name" value="PAPS_reductase"/>
    <property type="match status" value="1"/>
</dbReference>
<dbReference type="NCBIfam" id="NF002537">
    <property type="entry name" value="PRK02090.1"/>
    <property type="match status" value="1"/>
</dbReference>
<dbReference type="PANTHER" id="PTHR46509">
    <property type="entry name" value="PHOSPHOADENOSINE PHOSPHOSULFATE REDUCTASE"/>
    <property type="match status" value="1"/>
</dbReference>
<dbReference type="PANTHER" id="PTHR46509:SF1">
    <property type="entry name" value="PHOSPHOADENOSINE PHOSPHOSULFATE REDUCTASE"/>
    <property type="match status" value="1"/>
</dbReference>
<dbReference type="Pfam" id="PF01507">
    <property type="entry name" value="PAPS_reduct"/>
    <property type="match status" value="1"/>
</dbReference>
<dbReference type="PIRSF" id="PIRSF000857">
    <property type="entry name" value="PAPS_reductase"/>
    <property type="match status" value="1"/>
</dbReference>
<dbReference type="SUPFAM" id="SSF52402">
    <property type="entry name" value="Adenine nucleotide alpha hydrolases-like"/>
    <property type="match status" value="1"/>
</dbReference>
<organism>
    <name type="scientific">Yersinia pseudotuberculosis serotype IB (strain PB1/+)</name>
    <dbReference type="NCBI Taxonomy" id="502801"/>
    <lineage>
        <taxon>Bacteria</taxon>
        <taxon>Pseudomonadati</taxon>
        <taxon>Pseudomonadota</taxon>
        <taxon>Gammaproteobacteria</taxon>
        <taxon>Enterobacterales</taxon>
        <taxon>Yersiniaceae</taxon>
        <taxon>Yersinia</taxon>
    </lineage>
</organism>
<gene>
    <name evidence="1" type="primary">cysH</name>
    <name type="ordered locus">YPTS_0794</name>
</gene>
<proteinExistence type="inferred from homology"/>
<protein>
    <recommendedName>
        <fullName evidence="1">Phosphoadenosine 5'-phosphosulfate reductase</fullName>
        <shortName evidence="1">PAPS reductase</shortName>
        <ecNumber evidence="1">1.8.4.8</ecNumber>
    </recommendedName>
    <alternativeName>
        <fullName evidence="1">3'-phosphoadenylylsulfate reductase</fullName>
    </alternativeName>
    <alternativeName>
        <fullName evidence="1">PAPS reductase, thioredoxin dependent</fullName>
    </alternativeName>
    <alternativeName>
        <fullName evidence="1">PAPS sulfotransferase</fullName>
    </alternativeName>
    <alternativeName>
        <fullName evidence="1">PAdoPS reductase</fullName>
    </alternativeName>
</protein>
<feature type="chain" id="PRO_1000092194" description="Phosphoadenosine 5'-phosphosulfate reductase">
    <location>
        <begin position="1"/>
        <end position="244"/>
    </location>
</feature>
<feature type="active site" description="Nucleophile; cysteine thiosulfonate intermediate" evidence="1">
    <location>
        <position position="239"/>
    </location>
</feature>
<comment type="function">
    <text evidence="1">Catalyzes the formation of sulfite from phosphoadenosine 5'-phosphosulfate (PAPS) using thioredoxin as an electron donor.</text>
</comment>
<comment type="catalytic activity">
    <reaction evidence="1">
        <text>[thioredoxin]-disulfide + sulfite + adenosine 3',5'-bisphosphate + 2 H(+) = [thioredoxin]-dithiol + 3'-phosphoadenylyl sulfate</text>
        <dbReference type="Rhea" id="RHEA:11724"/>
        <dbReference type="Rhea" id="RHEA-COMP:10698"/>
        <dbReference type="Rhea" id="RHEA-COMP:10700"/>
        <dbReference type="ChEBI" id="CHEBI:15378"/>
        <dbReference type="ChEBI" id="CHEBI:17359"/>
        <dbReference type="ChEBI" id="CHEBI:29950"/>
        <dbReference type="ChEBI" id="CHEBI:50058"/>
        <dbReference type="ChEBI" id="CHEBI:58339"/>
        <dbReference type="ChEBI" id="CHEBI:58343"/>
        <dbReference type="EC" id="1.8.4.8"/>
    </reaction>
</comment>
<comment type="pathway">
    <text evidence="1">Sulfur metabolism; hydrogen sulfide biosynthesis; sulfite from sulfate: step 3/3.</text>
</comment>
<comment type="subcellular location">
    <subcellularLocation>
        <location evidence="1">Cytoplasm</location>
    </subcellularLocation>
</comment>
<comment type="similarity">
    <text evidence="1">Belongs to the PAPS reductase family. CysH subfamily.</text>
</comment>
<accession>B2K567</accession>
<sequence length="244" mass="27852">MSQFNLSELNALPKAKQAAALVLVNGQLEHLTAQERVSWALDNLPGEFVLSSSFGIQAAVCLHLVTRQRPDIPVILTDTGYLFPETYRFIDDLTEKLQLNLQVFRAAHSPAWQEARYGKLWEQGVEGIERYNTLNKVEPMNRALEALGAQTWFAGLRREQSGGRSQLPVLALQRGIFKLLPIIDWDNRQVYQYLTQHGLSYHPLWEQGYLSVGDTHTTRKWEPGMSEEETRFFGLKRECGLHEG</sequence>
<evidence type="ECO:0000255" key="1">
    <source>
        <dbReference type="HAMAP-Rule" id="MF_00063"/>
    </source>
</evidence>
<reference key="1">
    <citation type="submission" date="2008-04" db="EMBL/GenBank/DDBJ databases">
        <title>Complete sequence of Yersinia pseudotuberculosis PB1/+.</title>
        <authorList>
            <person name="Copeland A."/>
            <person name="Lucas S."/>
            <person name="Lapidus A."/>
            <person name="Glavina del Rio T."/>
            <person name="Dalin E."/>
            <person name="Tice H."/>
            <person name="Bruce D."/>
            <person name="Goodwin L."/>
            <person name="Pitluck S."/>
            <person name="Munk A.C."/>
            <person name="Brettin T."/>
            <person name="Detter J.C."/>
            <person name="Han C."/>
            <person name="Tapia R."/>
            <person name="Schmutz J."/>
            <person name="Larimer F."/>
            <person name="Land M."/>
            <person name="Hauser L."/>
            <person name="Challacombe J.F."/>
            <person name="Green L."/>
            <person name="Lindler L.E."/>
            <person name="Nikolich M.P."/>
            <person name="Richardson P."/>
        </authorList>
    </citation>
    <scope>NUCLEOTIDE SEQUENCE [LARGE SCALE GENOMIC DNA]</scope>
    <source>
        <strain>PB1/+</strain>
    </source>
</reference>